<gene>
    <name evidence="1" type="primary">nagZ</name>
    <name type="ordered locus">YpsIP31758_1592</name>
</gene>
<dbReference type="EC" id="3.2.1.52" evidence="1"/>
<dbReference type="EMBL" id="CP000720">
    <property type="protein sequence ID" value="ABS47117.1"/>
    <property type="molecule type" value="Genomic_DNA"/>
</dbReference>
<dbReference type="SMR" id="A7FH41"/>
<dbReference type="CAZy" id="GH3">
    <property type="family name" value="Glycoside Hydrolase Family 3"/>
</dbReference>
<dbReference type="KEGG" id="ypi:YpsIP31758_1592"/>
<dbReference type="HOGENOM" id="CLU_008392_0_0_6"/>
<dbReference type="UniPathway" id="UPA00544"/>
<dbReference type="Proteomes" id="UP000002412">
    <property type="component" value="Chromosome"/>
</dbReference>
<dbReference type="GO" id="GO:0005737">
    <property type="term" value="C:cytoplasm"/>
    <property type="evidence" value="ECO:0007669"/>
    <property type="project" value="UniProtKB-SubCell"/>
</dbReference>
<dbReference type="GO" id="GO:0004563">
    <property type="term" value="F:beta-N-acetylhexosaminidase activity"/>
    <property type="evidence" value="ECO:0007669"/>
    <property type="project" value="UniProtKB-UniRule"/>
</dbReference>
<dbReference type="GO" id="GO:0005975">
    <property type="term" value="P:carbohydrate metabolic process"/>
    <property type="evidence" value="ECO:0007669"/>
    <property type="project" value="InterPro"/>
</dbReference>
<dbReference type="GO" id="GO:0051301">
    <property type="term" value="P:cell division"/>
    <property type="evidence" value="ECO:0007669"/>
    <property type="project" value="UniProtKB-KW"/>
</dbReference>
<dbReference type="GO" id="GO:0071555">
    <property type="term" value="P:cell wall organization"/>
    <property type="evidence" value="ECO:0007669"/>
    <property type="project" value="UniProtKB-KW"/>
</dbReference>
<dbReference type="GO" id="GO:0009252">
    <property type="term" value="P:peptidoglycan biosynthetic process"/>
    <property type="evidence" value="ECO:0007669"/>
    <property type="project" value="UniProtKB-KW"/>
</dbReference>
<dbReference type="GO" id="GO:0009254">
    <property type="term" value="P:peptidoglycan turnover"/>
    <property type="evidence" value="ECO:0007669"/>
    <property type="project" value="UniProtKB-UniRule"/>
</dbReference>
<dbReference type="GO" id="GO:0008360">
    <property type="term" value="P:regulation of cell shape"/>
    <property type="evidence" value="ECO:0007669"/>
    <property type="project" value="UniProtKB-KW"/>
</dbReference>
<dbReference type="FunFam" id="3.20.20.300:FF:000001">
    <property type="entry name" value="Beta-hexosaminidase"/>
    <property type="match status" value="1"/>
</dbReference>
<dbReference type="Gene3D" id="3.20.20.300">
    <property type="entry name" value="Glycoside hydrolase, family 3, N-terminal domain"/>
    <property type="match status" value="1"/>
</dbReference>
<dbReference type="HAMAP" id="MF_00364">
    <property type="entry name" value="NagZ"/>
    <property type="match status" value="1"/>
</dbReference>
<dbReference type="InterPro" id="IPR022956">
    <property type="entry name" value="Beta_hexosaminidase_bac"/>
</dbReference>
<dbReference type="InterPro" id="IPR019800">
    <property type="entry name" value="Glyco_hydro_3_AS"/>
</dbReference>
<dbReference type="InterPro" id="IPR001764">
    <property type="entry name" value="Glyco_hydro_3_N"/>
</dbReference>
<dbReference type="InterPro" id="IPR036962">
    <property type="entry name" value="Glyco_hydro_3_N_sf"/>
</dbReference>
<dbReference type="InterPro" id="IPR017853">
    <property type="entry name" value="Glycoside_hydrolase_SF"/>
</dbReference>
<dbReference type="InterPro" id="IPR050226">
    <property type="entry name" value="NagZ_Beta-hexosaminidase"/>
</dbReference>
<dbReference type="NCBIfam" id="NF003740">
    <property type="entry name" value="PRK05337.1"/>
    <property type="match status" value="1"/>
</dbReference>
<dbReference type="PANTHER" id="PTHR30480:SF13">
    <property type="entry name" value="BETA-HEXOSAMINIDASE"/>
    <property type="match status" value="1"/>
</dbReference>
<dbReference type="PANTHER" id="PTHR30480">
    <property type="entry name" value="BETA-HEXOSAMINIDASE-RELATED"/>
    <property type="match status" value="1"/>
</dbReference>
<dbReference type="Pfam" id="PF00933">
    <property type="entry name" value="Glyco_hydro_3"/>
    <property type="match status" value="1"/>
</dbReference>
<dbReference type="SUPFAM" id="SSF51445">
    <property type="entry name" value="(Trans)glycosidases"/>
    <property type="match status" value="1"/>
</dbReference>
<dbReference type="PROSITE" id="PS00775">
    <property type="entry name" value="GLYCOSYL_HYDROL_F3"/>
    <property type="match status" value="1"/>
</dbReference>
<comment type="function">
    <text evidence="1">Plays a role in peptidoglycan recycling by cleaving the terminal beta-1,4-linked N-acetylglucosamine (GlcNAc) from peptide-linked peptidoglycan fragments, giving rise to free GlcNAc, anhydro-N-acetylmuramic acid and anhydro-N-acetylmuramic acid-linked peptides.</text>
</comment>
<comment type="catalytic activity">
    <reaction evidence="1">
        <text>Hydrolysis of terminal non-reducing N-acetyl-D-hexosamine residues in N-acetyl-beta-D-hexosaminides.</text>
        <dbReference type="EC" id="3.2.1.52"/>
    </reaction>
</comment>
<comment type="pathway">
    <text evidence="1">Cell wall biogenesis; peptidoglycan recycling.</text>
</comment>
<comment type="subcellular location">
    <subcellularLocation>
        <location evidence="1">Cytoplasm</location>
    </subcellularLocation>
</comment>
<comment type="similarity">
    <text evidence="1">Belongs to the glycosyl hydrolase 3 family. NagZ subfamily.</text>
</comment>
<feature type="chain" id="PRO_1000059897" description="Beta-hexosaminidase">
    <location>
        <begin position="1"/>
        <end position="343"/>
    </location>
</feature>
<feature type="active site" description="Proton donor/acceptor" evidence="1">
    <location>
        <position position="176"/>
    </location>
</feature>
<feature type="active site" description="Nucleophile" evidence="1">
    <location>
        <position position="248"/>
    </location>
</feature>
<feature type="binding site" evidence="1">
    <location>
        <position position="62"/>
    </location>
    <ligand>
        <name>substrate</name>
    </ligand>
</feature>
<feature type="binding site" evidence="1">
    <location>
        <position position="70"/>
    </location>
    <ligand>
        <name>substrate</name>
    </ligand>
</feature>
<feature type="binding site" evidence="1">
    <location>
        <position position="133"/>
    </location>
    <ligand>
        <name>substrate</name>
    </ligand>
</feature>
<feature type="binding site" evidence="1">
    <location>
        <begin position="163"/>
        <end position="164"/>
    </location>
    <ligand>
        <name>substrate</name>
    </ligand>
</feature>
<feature type="site" description="Important for catalytic activity" evidence="1">
    <location>
        <position position="174"/>
    </location>
</feature>
<sequence>MGPVMLDVASYELDAEEREILKHPLVGGLILFSRNFHDAEQLRELVRQIRAASHERLVVAVDQEGGRVQRFRDGFTRLPAAQSFAAINDAATAAQLAQEAGWLMAAEMMAMDIDISFAPVLDIGHVSAAIGERSFHSDPQQARIMAECFIRGMHSAGMKTTGKHFPGHGAVTADSHKETPHDNRPLAEIRTHDMVIFRELIQRKLLDAIMPAHVIYTEADARPASGSAYWLQEILRQELGFEGIIFSDDLSMEGAAIMGSYAERGQASLDAGCDMILVCNNRQGAVSVLDNLSPIKADQLTRLYHSGQFDRQTLMASSRWQQANKALTALSERWDAHKQTLGQ</sequence>
<evidence type="ECO:0000255" key="1">
    <source>
        <dbReference type="HAMAP-Rule" id="MF_00364"/>
    </source>
</evidence>
<organism>
    <name type="scientific">Yersinia pseudotuberculosis serotype O:1b (strain IP 31758)</name>
    <dbReference type="NCBI Taxonomy" id="349747"/>
    <lineage>
        <taxon>Bacteria</taxon>
        <taxon>Pseudomonadati</taxon>
        <taxon>Pseudomonadota</taxon>
        <taxon>Gammaproteobacteria</taxon>
        <taxon>Enterobacterales</taxon>
        <taxon>Yersiniaceae</taxon>
        <taxon>Yersinia</taxon>
    </lineage>
</organism>
<protein>
    <recommendedName>
        <fullName evidence="1">Beta-hexosaminidase</fullName>
        <ecNumber evidence="1">3.2.1.52</ecNumber>
    </recommendedName>
    <alternativeName>
        <fullName evidence="1">Beta-N-acetylhexosaminidase</fullName>
    </alternativeName>
    <alternativeName>
        <fullName evidence="1">N-acetyl-beta-glucosaminidase</fullName>
    </alternativeName>
</protein>
<accession>A7FH41</accession>
<keyword id="KW-0131">Cell cycle</keyword>
<keyword id="KW-0132">Cell division</keyword>
<keyword id="KW-0133">Cell shape</keyword>
<keyword id="KW-0961">Cell wall biogenesis/degradation</keyword>
<keyword id="KW-0963">Cytoplasm</keyword>
<keyword id="KW-0326">Glycosidase</keyword>
<keyword id="KW-0378">Hydrolase</keyword>
<keyword id="KW-0573">Peptidoglycan synthesis</keyword>
<name>NAGZ_YERP3</name>
<proteinExistence type="inferred from homology"/>
<reference key="1">
    <citation type="journal article" date="2007" name="PLoS Genet.">
        <title>The complete genome sequence of Yersinia pseudotuberculosis IP31758, the causative agent of Far East scarlet-like fever.</title>
        <authorList>
            <person name="Eppinger M."/>
            <person name="Rosovitz M.J."/>
            <person name="Fricke W.F."/>
            <person name="Rasko D.A."/>
            <person name="Kokorina G."/>
            <person name="Fayolle C."/>
            <person name="Lindler L.E."/>
            <person name="Carniel E."/>
            <person name="Ravel J."/>
        </authorList>
    </citation>
    <scope>NUCLEOTIDE SEQUENCE [LARGE SCALE GENOMIC DNA]</scope>
    <source>
        <strain>IP 31758</strain>
    </source>
</reference>